<feature type="signal peptide" evidence="1">
    <location>
        <begin position="1"/>
        <end position="17"/>
    </location>
</feature>
<feature type="chain" id="PRO_0000120569" description="Putative meiotic phospholipase SPO1">
    <location>
        <begin position="18"/>
        <end position="631"/>
    </location>
</feature>
<feature type="transmembrane region" description="Helical" evidence="1">
    <location>
        <begin position="376"/>
        <end position="396"/>
    </location>
</feature>
<feature type="domain" description="PLA2c" evidence="2">
    <location>
        <begin position="24"/>
        <end position="631"/>
    </location>
</feature>
<feature type="region of interest" description="Required for lipid-binding and function in meiosis">
    <location>
        <begin position="24"/>
        <end position="67"/>
    </location>
</feature>
<feature type="glycosylation site" description="N-linked (GlcNAc...) asparagine" evidence="1">
    <location>
        <position position="233"/>
    </location>
</feature>
<feature type="glycosylation site" description="N-linked (GlcNAc...) asparagine" evidence="1">
    <location>
        <position position="293"/>
    </location>
</feature>
<feature type="glycosylation site" description="N-linked (GlcNAc...) asparagine" evidence="1">
    <location>
        <position position="303"/>
    </location>
</feature>
<feature type="glycosylation site" description="N-linked (GlcNAc...) asparagine" evidence="1">
    <location>
        <position position="500"/>
    </location>
</feature>
<feature type="glycosylation site" description="N-linked (GlcNAc...) asparagine" evidence="1">
    <location>
        <position position="536"/>
    </location>
</feature>
<feature type="glycosylation site" description="N-linked (GlcNAc...) asparagine" evidence="1">
    <location>
        <position position="560"/>
    </location>
</feature>
<feature type="glycosylation site" description="N-linked (GlcNAc...) asparagine" evidence="1">
    <location>
        <position position="563"/>
    </location>
</feature>
<feature type="glycosylation site" description="N-linked (GlcNAc...) asparagine" evidence="1">
    <location>
        <position position="572"/>
    </location>
</feature>
<feature type="mutagenesis site" description="In SPO1-1; defective in sporulation at 34 degrees Celsius." evidence="3">
    <original>I</original>
    <variation>F</variation>
    <location>
        <position position="103"/>
    </location>
</feature>
<feature type="mutagenesis site" description="Loss of function." evidence="3">
    <original>S</original>
    <variation>A</variation>
    <location>
        <position position="122"/>
    </location>
</feature>
<reference key="1">
    <citation type="journal article" date="1996" name="Gene">
        <title>The SPO1 gene product required for meiosis in yeast has a high similarity to phospholipase B enzymes.</title>
        <authorList>
            <person name="Tevzadze G.G."/>
            <person name="Mushegian A.R."/>
            <person name="Esposito R.E."/>
        </authorList>
    </citation>
    <scope>NUCLEOTIDE SEQUENCE [GENOMIC DNA]</scope>
</reference>
<reference key="2">
    <citation type="journal article" date="1997" name="Nature">
        <title>The nucleotide sequence of Saccharomyces cerevisiae chromosome XIV and its evolutionary implications.</title>
        <authorList>
            <person name="Philippsen P."/>
            <person name="Kleine K."/>
            <person name="Poehlmann R."/>
            <person name="Duesterhoeft A."/>
            <person name="Hamberg K."/>
            <person name="Hegemann J.H."/>
            <person name="Obermaier B."/>
            <person name="Urrestarazu L.A."/>
            <person name="Aert R."/>
            <person name="Albermann K."/>
            <person name="Altmann R."/>
            <person name="Andre B."/>
            <person name="Baladron V."/>
            <person name="Ballesta J.P.G."/>
            <person name="Becam A.-M."/>
            <person name="Beinhauer J.D."/>
            <person name="Boskovic J."/>
            <person name="Buitrago M.J."/>
            <person name="Bussereau F."/>
            <person name="Coster F."/>
            <person name="Crouzet M."/>
            <person name="D'Angelo M."/>
            <person name="Dal Pero F."/>
            <person name="De Antoni A."/>
            <person name="del Rey F."/>
            <person name="Doignon F."/>
            <person name="Domdey H."/>
            <person name="Dubois E."/>
            <person name="Fiedler T.A."/>
            <person name="Fleig U."/>
            <person name="Floeth M."/>
            <person name="Fritz C."/>
            <person name="Gaillardin C."/>
            <person name="Garcia-Cantalejo J.M."/>
            <person name="Glansdorff N."/>
            <person name="Goffeau A."/>
            <person name="Gueldener U."/>
            <person name="Herbert C.J."/>
            <person name="Heumann K."/>
            <person name="Heuss-Neitzel D."/>
            <person name="Hilbert H."/>
            <person name="Hinni K."/>
            <person name="Iraqui Houssaini I."/>
            <person name="Jacquet M."/>
            <person name="Jimenez A."/>
            <person name="Jonniaux J.-L."/>
            <person name="Karpfinger-Hartl L."/>
            <person name="Lanfranchi G."/>
            <person name="Lepingle A."/>
            <person name="Levesque H."/>
            <person name="Lyck R."/>
            <person name="Maftahi M."/>
            <person name="Mallet L."/>
            <person name="Maurer C.T.C."/>
            <person name="Messenguy F."/>
            <person name="Mewes H.-W."/>
            <person name="Moestl D."/>
            <person name="Nasr F."/>
            <person name="Nicaud J.-M."/>
            <person name="Niedenthal R.K."/>
            <person name="Pandolfo D."/>
            <person name="Pierard A."/>
            <person name="Piravandi E."/>
            <person name="Planta R.J."/>
            <person name="Pohl T.M."/>
            <person name="Purnelle B."/>
            <person name="Rebischung C."/>
            <person name="Remacha M.A."/>
            <person name="Revuelta J.L."/>
            <person name="Rinke M."/>
            <person name="Saiz J.E."/>
            <person name="Sartorello F."/>
            <person name="Scherens B."/>
            <person name="Sen-Gupta M."/>
            <person name="Soler-Mira A."/>
            <person name="Urbanus J.H.M."/>
            <person name="Valle G."/>
            <person name="Van Dyck L."/>
            <person name="Verhasselt P."/>
            <person name="Vierendeels F."/>
            <person name="Vissers S."/>
            <person name="Voet M."/>
            <person name="Volckaert G."/>
            <person name="Wach A."/>
            <person name="Wambutt R."/>
            <person name="Wedler H."/>
            <person name="Zollner A."/>
            <person name="Hani J."/>
        </authorList>
    </citation>
    <scope>NUCLEOTIDE SEQUENCE [LARGE SCALE GENOMIC DNA]</scope>
    <source>
        <strain>ATCC 204508 / S288c</strain>
    </source>
</reference>
<reference key="3">
    <citation type="journal article" date="2014" name="G3 (Bethesda)">
        <title>The reference genome sequence of Saccharomyces cerevisiae: Then and now.</title>
        <authorList>
            <person name="Engel S.R."/>
            <person name="Dietrich F.S."/>
            <person name="Fisk D.G."/>
            <person name="Binkley G."/>
            <person name="Balakrishnan R."/>
            <person name="Costanzo M.C."/>
            <person name="Dwight S.S."/>
            <person name="Hitz B.C."/>
            <person name="Karra K."/>
            <person name="Nash R.S."/>
            <person name="Weng S."/>
            <person name="Wong E.D."/>
            <person name="Lloyd P."/>
            <person name="Skrzypek M.S."/>
            <person name="Miyasato S.R."/>
            <person name="Simison M."/>
            <person name="Cherry J.M."/>
        </authorList>
    </citation>
    <scope>GENOME REANNOTATION</scope>
    <source>
        <strain>ATCC 204508 / S288c</strain>
    </source>
</reference>
<reference key="4">
    <citation type="journal article" date="2000" name="Chromosoma">
        <title>Spo1, a phospholipase B homolog, is required for spindle pole body duplication during meiosis in Saccharomyces cerevisiae.</title>
        <authorList>
            <person name="Tevzadze G.G."/>
            <person name="Swift H."/>
            <person name="Esposito R.E."/>
        </authorList>
    </citation>
    <scope>FUNCTION</scope>
    <scope>INDUCTION</scope>
    <scope>SUBCELLULAR LOCATION</scope>
    <scope>MUTAGENESIS OF ILE-103 AND SER-122</scope>
</reference>
<reference key="5">
    <citation type="journal article" date="2000" name="Nucleic Acids Res.">
        <title>Test of intron predictions reveals novel splice sites, alternatively spliced mRNAs and new introns in meiotically regulated genes of yeast.</title>
        <authorList>
            <person name="Davis C.A."/>
            <person name="Grate L."/>
            <person name="Spingola M."/>
            <person name="Ares M. Jr."/>
        </authorList>
    </citation>
    <scope>IDENTIFICATION OF INTRON</scope>
</reference>
<reference key="6">
    <citation type="journal article" date="2007" name="Genetics">
        <title>Genetic evidence for a SPO1-dependent signaling pathway controlling meiotic progression in yeast.</title>
        <authorList>
            <person name="Tevzadze G.G."/>
            <person name="Pierce J.V."/>
            <person name="Esposito R.E."/>
        </authorList>
    </citation>
    <scope>FUNCTION</scope>
    <scope>INTERACTION WITH SPO23</scope>
    <scope>SUBCELLULAR LOCATION</scope>
    <scope>GLYCOSYLATION</scope>
    <scope>LIPID-BINDING REGION</scope>
</reference>
<organism>
    <name type="scientific">Saccharomyces cerevisiae (strain ATCC 204508 / S288c)</name>
    <name type="common">Baker's yeast</name>
    <dbReference type="NCBI Taxonomy" id="559292"/>
    <lineage>
        <taxon>Eukaryota</taxon>
        <taxon>Fungi</taxon>
        <taxon>Dikarya</taxon>
        <taxon>Ascomycota</taxon>
        <taxon>Saccharomycotina</taxon>
        <taxon>Saccharomycetes</taxon>
        <taxon>Saccharomycetales</taxon>
        <taxon>Saccharomycetaceae</taxon>
        <taxon>Saccharomyces</taxon>
    </lineage>
</organism>
<sequence>MQKLLFVFSVLLTVVLATAPFQVQCPSSPLIREAKHELCPEETLYLKKKKIKTKNKLIQFLKSLTEAKFSSKFYKRVLKDPPKIGIAISGGGYRSMLVGTGFISQMNDYGLFEYSDYIAGLSGGSWILMDLVVQNFEVKSLLQEWDLEEDLLLGIPEFDISEEEIVTNAKKEYNDNDLKMKKRQGGSLITSSSNFYEQIEEIMNSIEEIPEDYMITKRNLNPLARLKKIFFPNNTFTGTDAKIETFKKVLDFYKSLHLKIKPKKMEGFQISFTDYWGKAIVQRLKKNFDDDPNHSFSFSKLVNSSKKFKECSVPIPIFVANCKNGLLSNVIFEFTPFEFGSWENILRLFVKLPYLGSKIVSGKAEKCINNFDDLGFITATSSSIFNNVLIFIWNLASQSSREAMKALNMVMGIFGLGKEEIFSISKDSSRLETDYAVYQPNPFYLYPEKDNVLTNKNHLYLVDGGEDGENIPLRTLVIPERELDVIFVLDSSSDIDNYPNGSKLKRIFEKLDEENVHYQFPNNVKTFTHPIVIGCNATKRTGHDSFLPIIIYHANANHGNASNTSTFKITYNQSEVSSMLPTGRGVFSNDYDLYYKNCLGCILTKRTMDRLPRKKKFSPFCLQCFKDYCYS</sequence>
<comment type="function">
    <text evidence="3 4">Regulates spindle pole duplication in meiosis I, but not in mitosis. Required for meiosis I, meiosis II chromosome segregation and spore formation. Binds phosphatidylinositol (4)P mono- and polyphosphates.</text>
</comment>
<comment type="subunit">
    <text evidence="4">Interacts with SPO23.</text>
</comment>
<comment type="subcellular location">
    <subcellularLocation>
        <location>Endoplasmic reticulum membrane</location>
        <topology>Single-pass membrane protein</topology>
    </subcellularLocation>
    <subcellularLocation>
        <location>Nucleus membrane</location>
        <topology>Single-pass membrane protein</topology>
    </subcellularLocation>
</comment>
<comment type="induction">
    <text evidence="3">Induced early in sporulation. Not detected during vegetative growth.</text>
</comment>
<comment type="PTM">
    <text evidence="4">Glycosylated.</text>
</comment>
<comment type="similarity">
    <text evidence="5">Belongs to the lysophospholipase family.</text>
</comment>
<comment type="sequence caution" evidence="5">
    <conflict type="erroneous gene model prediction">
        <sequence resource="EMBL-CDS" id="AAB38425"/>
    </conflict>
</comment>
<comment type="sequence caution" evidence="5">
    <conflict type="erroneous gene model prediction">
        <sequence resource="EMBL-CDS" id="CAA95872"/>
    </conflict>
</comment>
<gene>
    <name type="primary">SPO1</name>
    <name type="ordered locus">YNL012W</name>
    <name type="ORF">N2858</name>
</gene>
<proteinExistence type="evidence at protein level"/>
<protein>
    <recommendedName>
        <fullName>Putative meiotic phospholipase SPO1</fullName>
        <ecNumber>3.1.1.-</ecNumber>
    </recommendedName>
    <alternativeName>
        <fullName>Sporulation-specific protein 1</fullName>
    </alternativeName>
</protein>
<evidence type="ECO:0000255" key="1"/>
<evidence type="ECO:0000255" key="2">
    <source>
        <dbReference type="PROSITE-ProRule" id="PRU00555"/>
    </source>
</evidence>
<evidence type="ECO:0000269" key="3">
    <source>
    </source>
</evidence>
<evidence type="ECO:0000269" key="4">
    <source>
    </source>
</evidence>
<evidence type="ECO:0000305" key="5"/>
<accession>P53541</accession>
<accession>D6W1G5</accession>
<name>SPO1_YEAST</name>
<dbReference type="EC" id="3.1.1.-"/>
<dbReference type="EMBL" id="L39372">
    <property type="protein sequence ID" value="AAB38425.1"/>
    <property type="status" value="ALT_SEQ"/>
    <property type="molecule type" value="Genomic_DNA"/>
</dbReference>
<dbReference type="EMBL" id="Z71288">
    <property type="protein sequence ID" value="CAA95872.1"/>
    <property type="status" value="ALT_SEQ"/>
    <property type="molecule type" value="Genomic_DNA"/>
</dbReference>
<dbReference type="EMBL" id="BK006947">
    <property type="protein sequence ID" value="DAA10531.1"/>
    <property type="molecule type" value="Genomic_DNA"/>
</dbReference>
<dbReference type="PIR" id="S62110">
    <property type="entry name" value="S62110"/>
</dbReference>
<dbReference type="RefSeq" id="NP_014386.2">
    <property type="nucleotide sequence ID" value="NM_001182851.1"/>
</dbReference>
<dbReference type="SMR" id="P53541"/>
<dbReference type="BioGRID" id="35813">
    <property type="interactions" value="112"/>
</dbReference>
<dbReference type="DIP" id="DIP-1650N"/>
<dbReference type="FunCoup" id="P53541">
    <property type="interactions" value="46"/>
</dbReference>
<dbReference type="IntAct" id="P53541">
    <property type="interactions" value="12"/>
</dbReference>
<dbReference type="MINT" id="P53541"/>
<dbReference type="STRING" id="4932.YNL012W"/>
<dbReference type="GlyCosmos" id="P53541">
    <property type="glycosylation" value="8 sites, No reported glycans"/>
</dbReference>
<dbReference type="GlyGen" id="P53541">
    <property type="glycosylation" value="8 sites"/>
</dbReference>
<dbReference type="PaxDb" id="4932-YNL012W"/>
<dbReference type="PeptideAtlas" id="P53541"/>
<dbReference type="EnsemblFungi" id="YNL012W_mRNA">
    <property type="protein sequence ID" value="YNL012W"/>
    <property type="gene ID" value="YNL012W"/>
</dbReference>
<dbReference type="GeneID" id="855720"/>
<dbReference type="KEGG" id="sce:YNL012W"/>
<dbReference type="AGR" id="SGD:S000004957"/>
<dbReference type="SGD" id="S000004957">
    <property type="gene designation" value="SPO1"/>
</dbReference>
<dbReference type="VEuPathDB" id="FungiDB:YNL012W"/>
<dbReference type="eggNOG" id="KOG1325">
    <property type="taxonomic scope" value="Eukaryota"/>
</dbReference>
<dbReference type="GeneTree" id="ENSGT01030000234606"/>
<dbReference type="HOGENOM" id="CLU_014602_2_0_1"/>
<dbReference type="InParanoid" id="P53541"/>
<dbReference type="OMA" id="FIANCRN"/>
<dbReference type="OrthoDB" id="4084751at2759"/>
<dbReference type="BioCyc" id="YEAST:YNL012W-MONOMER"/>
<dbReference type="Reactome" id="R-SCE-111995">
    <property type="pathway name" value="phospho-PLA2 pathway"/>
</dbReference>
<dbReference type="Reactome" id="R-SCE-1482788">
    <property type="pathway name" value="Acyl chain remodelling of PC"/>
</dbReference>
<dbReference type="Reactome" id="R-SCE-1482798">
    <property type="pathway name" value="Acyl chain remodeling of CL"/>
</dbReference>
<dbReference type="Reactome" id="R-SCE-1482801">
    <property type="pathway name" value="Acyl chain remodelling of PS"/>
</dbReference>
<dbReference type="Reactome" id="R-SCE-1482839">
    <property type="pathway name" value="Acyl chain remodelling of PE"/>
</dbReference>
<dbReference type="Reactome" id="R-SCE-1482922">
    <property type="pathway name" value="Acyl chain remodelling of PI"/>
</dbReference>
<dbReference type="Reactome" id="R-SCE-1482925">
    <property type="pathway name" value="Acyl chain remodelling of PG"/>
</dbReference>
<dbReference type="Reactome" id="R-SCE-1483115">
    <property type="pathway name" value="Hydrolysis of LPC"/>
</dbReference>
<dbReference type="Reactome" id="R-SCE-1483152">
    <property type="pathway name" value="Hydrolysis of LPE"/>
</dbReference>
<dbReference type="Reactome" id="R-SCE-1483166">
    <property type="pathway name" value="Synthesis of PA"/>
</dbReference>
<dbReference type="Reactome" id="R-SCE-2142753">
    <property type="pathway name" value="Arachidonate metabolism"/>
</dbReference>
<dbReference type="Reactome" id="R-SCE-418592">
    <property type="pathway name" value="ADP signalling through P2Y purinoceptor 1"/>
</dbReference>
<dbReference type="Reactome" id="R-SCE-432142">
    <property type="pathway name" value="Platelet sensitization by LDL"/>
</dbReference>
<dbReference type="Reactome" id="R-SCE-6811436">
    <property type="pathway name" value="COPI-independent Golgi-to-ER retrograde traffic"/>
</dbReference>
<dbReference type="PRO" id="PR:P53541"/>
<dbReference type="Proteomes" id="UP000002311">
    <property type="component" value="Chromosome XIV"/>
</dbReference>
<dbReference type="RNAct" id="P53541">
    <property type="molecule type" value="protein"/>
</dbReference>
<dbReference type="GO" id="GO:0005829">
    <property type="term" value="C:cytosol"/>
    <property type="evidence" value="ECO:0000318"/>
    <property type="project" value="GO_Central"/>
</dbReference>
<dbReference type="GO" id="GO:0005783">
    <property type="term" value="C:endoplasmic reticulum"/>
    <property type="evidence" value="ECO:0000314"/>
    <property type="project" value="SGD"/>
</dbReference>
<dbReference type="GO" id="GO:0005789">
    <property type="term" value="C:endoplasmic reticulum membrane"/>
    <property type="evidence" value="ECO:0007669"/>
    <property type="project" value="UniProtKB-SubCell"/>
</dbReference>
<dbReference type="GO" id="GO:0005576">
    <property type="term" value="C:extracellular region"/>
    <property type="evidence" value="ECO:0000318"/>
    <property type="project" value="GO_Central"/>
</dbReference>
<dbReference type="GO" id="GO:0000324">
    <property type="term" value="C:fungal-type vacuole"/>
    <property type="evidence" value="ECO:0007005"/>
    <property type="project" value="SGD"/>
</dbReference>
<dbReference type="GO" id="GO:0031965">
    <property type="term" value="C:nuclear membrane"/>
    <property type="evidence" value="ECO:0007669"/>
    <property type="project" value="UniProtKB-SubCell"/>
</dbReference>
<dbReference type="GO" id="GO:0005634">
    <property type="term" value="C:nucleus"/>
    <property type="evidence" value="ECO:0000314"/>
    <property type="project" value="SGD"/>
</dbReference>
<dbReference type="GO" id="GO:0005886">
    <property type="term" value="C:plasma membrane"/>
    <property type="evidence" value="ECO:0000318"/>
    <property type="project" value="GO_Central"/>
</dbReference>
<dbReference type="GO" id="GO:0005628">
    <property type="term" value="C:prospore membrane"/>
    <property type="evidence" value="ECO:0000314"/>
    <property type="project" value="SGD"/>
</dbReference>
<dbReference type="GO" id="GO:0004623">
    <property type="term" value="F:phospholipase A2 activity"/>
    <property type="evidence" value="ECO:0000318"/>
    <property type="project" value="GO_Central"/>
</dbReference>
<dbReference type="GO" id="GO:0004620">
    <property type="term" value="F:phospholipase activity"/>
    <property type="evidence" value="ECO:0000250"/>
    <property type="project" value="SGD"/>
</dbReference>
<dbReference type="GO" id="GO:0032120">
    <property type="term" value="P:ascospore-type prospore membrane formation"/>
    <property type="evidence" value="ECO:0000315"/>
    <property type="project" value="SGD"/>
</dbReference>
<dbReference type="GO" id="GO:0046475">
    <property type="term" value="P:glycerophospholipid catabolic process"/>
    <property type="evidence" value="ECO:0000318"/>
    <property type="project" value="GO_Central"/>
</dbReference>
<dbReference type="GO" id="GO:0007127">
    <property type="term" value="P:meiosis I"/>
    <property type="evidence" value="ECO:0000315"/>
    <property type="project" value="SGD"/>
</dbReference>
<dbReference type="GO" id="GO:0030474">
    <property type="term" value="P:spindle pole body duplication"/>
    <property type="evidence" value="ECO:0000315"/>
    <property type="project" value="SGD"/>
</dbReference>
<dbReference type="GO" id="GO:0070583">
    <property type="term" value="P:spore membrane bending pathway"/>
    <property type="evidence" value="ECO:0000315"/>
    <property type="project" value="SGD"/>
</dbReference>
<dbReference type="Gene3D" id="3.40.1090.10">
    <property type="entry name" value="Cytosolic phospholipase A2 catalytic domain"/>
    <property type="match status" value="1"/>
</dbReference>
<dbReference type="InterPro" id="IPR016035">
    <property type="entry name" value="Acyl_Trfase/lysoPLipase"/>
</dbReference>
<dbReference type="InterPro" id="IPR002642">
    <property type="entry name" value="LysoPLipase_cat_dom"/>
</dbReference>
<dbReference type="PANTHER" id="PTHR10728">
    <property type="entry name" value="CYTOSOLIC PHOSPHOLIPASE A2"/>
    <property type="match status" value="1"/>
</dbReference>
<dbReference type="PANTHER" id="PTHR10728:SF56">
    <property type="entry name" value="MEIOTIC PHOSPHOLIPASE SPO1-RELATED"/>
    <property type="match status" value="1"/>
</dbReference>
<dbReference type="Pfam" id="PF01735">
    <property type="entry name" value="PLA2_B"/>
    <property type="match status" value="2"/>
</dbReference>
<dbReference type="SMART" id="SM00022">
    <property type="entry name" value="PLAc"/>
    <property type="match status" value="1"/>
</dbReference>
<dbReference type="SUPFAM" id="SSF52151">
    <property type="entry name" value="FabD/lysophospholipase-like"/>
    <property type="match status" value="1"/>
</dbReference>
<dbReference type="PROSITE" id="PS51210">
    <property type="entry name" value="PLA2C"/>
    <property type="match status" value="1"/>
</dbReference>
<keyword id="KW-0256">Endoplasmic reticulum</keyword>
<keyword id="KW-0325">Glycoprotein</keyword>
<keyword id="KW-0378">Hydrolase</keyword>
<keyword id="KW-0442">Lipid degradation</keyword>
<keyword id="KW-0443">Lipid metabolism</keyword>
<keyword id="KW-0469">Meiosis</keyword>
<keyword id="KW-0472">Membrane</keyword>
<keyword id="KW-0539">Nucleus</keyword>
<keyword id="KW-1185">Reference proteome</keyword>
<keyword id="KW-0732">Signal</keyword>
<keyword id="KW-0749">Sporulation</keyword>
<keyword id="KW-0812">Transmembrane</keyword>
<keyword id="KW-1133">Transmembrane helix</keyword>